<accession>A4IJI5</accession>
<feature type="chain" id="PRO_1000014198" description="Small ribosomal subunit protein uS7">
    <location>
        <begin position="1"/>
        <end position="156"/>
    </location>
</feature>
<organism>
    <name type="scientific">Geobacillus thermodenitrificans (strain NG80-2)</name>
    <dbReference type="NCBI Taxonomy" id="420246"/>
    <lineage>
        <taxon>Bacteria</taxon>
        <taxon>Bacillati</taxon>
        <taxon>Bacillota</taxon>
        <taxon>Bacilli</taxon>
        <taxon>Bacillales</taxon>
        <taxon>Anoxybacillaceae</taxon>
        <taxon>Geobacillus</taxon>
    </lineage>
</organism>
<gene>
    <name evidence="1" type="primary">rpsG</name>
    <name type="ordered locus">GTNG_0102</name>
</gene>
<dbReference type="EMBL" id="CP000557">
    <property type="protein sequence ID" value="ABO65489.1"/>
    <property type="molecule type" value="Genomic_DNA"/>
</dbReference>
<dbReference type="RefSeq" id="WP_008881948.1">
    <property type="nucleotide sequence ID" value="NC_009328.1"/>
</dbReference>
<dbReference type="SMR" id="A4IJI5"/>
<dbReference type="GeneID" id="87622330"/>
<dbReference type="KEGG" id="gtn:GTNG_0102"/>
<dbReference type="eggNOG" id="COG0049">
    <property type="taxonomic scope" value="Bacteria"/>
</dbReference>
<dbReference type="HOGENOM" id="CLU_072226_1_1_9"/>
<dbReference type="Proteomes" id="UP000001578">
    <property type="component" value="Chromosome"/>
</dbReference>
<dbReference type="GO" id="GO:0015935">
    <property type="term" value="C:small ribosomal subunit"/>
    <property type="evidence" value="ECO:0007669"/>
    <property type="project" value="InterPro"/>
</dbReference>
<dbReference type="GO" id="GO:0019843">
    <property type="term" value="F:rRNA binding"/>
    <property type="evidence" value="ECO:0007669"/>
    <property type="project" value="UniProtKB-UniRule"/>
</dbReference>
<dbReference type="GO" id="GO:0003735">
    <property type="term" value="F:structural constituent of ribosome"/>
    <property type="evidence" value="ECO:0007669"/>
    <property type="project" value="InterPro"/>
</dbReference>
<dbReference type="GO" id="GO:0000049">
    <property type="term" value="F:tRNA binding"/>
    <property type="evidence" value="ECO:0007669"/>
    <property type="project" value="UniProtKB-UniRule"/>
</dbReference>
<dbReference type="GO" id="GO:0006412">
    <property type="term" value="P:translation"/>
    <property type="evidence" value="ECO:0007669"/>
    <property type="project" value="UniProtKB-UniRule"/>
</dbReference>
<dbReference type="CDD" id="cd14869">
    <property type="entry name" value="uS7_Bacteria"/>
    <property type="match status" value="1"/>
</dbReference>
<dbReference type="FunFam" id="1.10.455.10:FF:000001">
    <property type="entry name" value="30S ribosomal protein S7"/>
    <property type="match status" value="1"/>
</dbReference>
<dbReference type="Gene3D" id="1.10.455.10">
    <property type="entry name" value="Ribosomal protein S7 domain"/>
    <property type="match status" value="1"/>
</dbReference>
<dbReference type="HAMAP" id="MF_00480_B">
    <property type="entry name" value="Ribosomal_uS7_B"/>
    <property type="match status" value="1"/>
</dbReference>
<dbReference type="InterPro" id="IPR000235">
    <property type="entry name" value="Ribosomal_uS7"/>
</dbReference>
<dbReference type="InterPro" id="IPR005717">
    <property type="entry name" value="Ribosomal_uS7_bac/org-type"/>
</dbReference>
<dbReference type="InterPro" id="IPR020606">
    <property type="entry name" value="Ribosomal_uS7_CS"/>
</dbReference>
<dbReference type="InterPro" id="IPR023798">
    <property type="entry name" value="Ribosomal_uS7_dom"/>
</dbReference>
<dbReference type="InterPro" id="IPR036823">
    <property type="entry name" value="Ribosomal_uS7_dom_sf"/>
</dbReference>
<dbReference type="NCBIfam" id="TIGR01029">
    <property type="entry name" value="rpsG_bact"/>
    <property type="match status" value="1"/>
</dbReference>
<dbReference type="PANTHER" id="PTHR11205">
    <property type="entry name" value="RIBOSOMAL PROTEIN S7"/>
    <property type="match status" value="1"/>
</dbReference>
<dbReference type="Pfam" id="PF00177">
    <property type="entry name" value="Ribosomal_S7"/>
    <property type="match status" value="1"/>
</dbReference>
<dbReference type="PIRSF" id="PIRSF002122">
    <property type="entry name" value="RPS7p_RPS7a_RPS5e_RPS7o"/>
    <property type="match status" value="1"/>
</dbReference>
<dbReference type="SUPFAM" id="SSF47973">
    <property type="entry name" value="Ribosomal protein S7"/>
    <property type="match status" value="1"/>
</dbReference>
<dbReference type="PROSITE" id="PS00052">
    <property type="entry name" value="RIBOSOMAL_S7"/>
    <property type="match status" value="1"/>
</dbReference>
<protein>
    <recommendedName>
        <fullName evidence="1">Small ribosomal subunit protein uS7</fullName>
    </recommendedName>
    <alternativeName>
        <fullName evidence="2">30S ribosomal protein S7</fullName>
    </alternativeName>
</protein>
<sequence length="156" mass="18005">MPRRGPVAKRDVLPDPIYNSKLVTRLINKIMIDGKKSKAQKILYTAFDIIRERTGKDPMEVFEQALKNVMPVLEVRARRVGGANYQVPVEVRPDRRVSLGLRWLVQYSRLRGEKTMEERLANEIMDAANNTGAAVKKREDTHKMAEANKAFAHYRW</sequence>
<name>RS7_GEOTN</name>
<comment type="function">
    <text evidence="1">One of the primary rRNA binding proteins, it binds directly to 16S rRNA where it nucleates assembly of the head domain of the 30S subunit. Is located at the subunit interface close to the decoding center, probably blocks exit of the E-site tRNA.</text>
</comment>
<comment type="subunit">
    <text evidence="1">Part of the 30S ribosomal subunit. Contacts proteins S9 and S11.</text>
</comment>
<comment type="similarity">
    <text evidence="1">Belongs to the universal ribosomal protein uS7 family.</text>
</comment>
<evidence type="ECO:0000255" key="1">
    <source>
        <dbReference type="HAMAP-Rule" id="MF_00480"/>
    </source>
</evidence>
<evidence type="ECO:0000305" key="2"/>
<proteinExistence type="inferred from homology"/>
<reference key="1">
    <citation type="journal article" date="2007" name="Proc. Natl. Acad. Sci. U.S.A.">
        <title>Genome and proteome of long-chain alkane degrading Geobacillus thermodenitrificans NG80-2 isolated from a deep-subsurface oil reservoir.</title>
        <authorList>
            <person name="Feng L."/>
            <person name="Wang W."/>
            <person name="Cheng J."/>
            <person name="Ren Y."/>
            <person name="Zhao G."/>
            <person name="Gao C."/>
            <person name="Tang Y."/>
            <person name="Liu X."/>
            <person name="Han W."/>
            <person name="Peng X."/>
            <person name="Liu R."/>
            <person name="Wang L."/>
        </authorList>
    </citation>
    <scope>NUCLEOTIDE SEQUENCE [LARGE SCALE GENOMIC DNA]</scope>
    <source>
        <strain>NG80-2</strain>
    </source>
</reference>
<keyword id="KW-0687">Ribonucleoprotein</keyword>
<keyword id="KW-0689">Ribosomal protein</keyword>
<keyword id="KW-0694">RNA-binding</keyword>
<keyword id="KW-0699">rRNA-binding</keyword>
<keyword id="KW-0820">tRNA-binding</keyword>